<feature type="chain" id="PRO_1000192671" description="ATP-dependent protease subunit HslV">
    <location>
        <begin position="1"/>
        <end position="180"/>
    </location>
</feature>
<feature type="active site" evidence="1">
    <location>
        <position position="7"/>
    </location>
</feature>
<feature type="binding site" evidence="1">
    <location>
        <position position="165"/>
    </location>
    <ligand>
        <name>Na(+)</name>
        <dbReference type="ChEBI" id="CHEBI:29101"/>
    </ligand>
</feature>
<feature type="binding site" evidence="1">
    <location>
        <position position="168"/>
    </location>
    <ligand>
        <name>Na(+)</name>
        <dbReference type="ChEBI" id="CHEBI:29101"/>
    </ligand>
</feature>
<feature type="binding site" evidence="1">
    <location>
        <position position="171"/>
    </location>
    <ligand>
        <name>Na(+)</name>
        <dbReference type="ChEBI" id="CHEBI:29101"/>
    </ligand>
</feature>
<evidence type="ECO:0000255" key="1">
    <source>
        <dbReference type="HAMAP-Rule" id="MF_00248"/>
    </source>
</evidence>
<keyword id="KW-0021">Allosteric enzyme</keyword>
<keyword id="KW-0963">Cytoplasm</keyword>
<keyword id="KW-0378">Hydrolase</keyword>
<keyword id="KW-0479">Metal-binding</keyword>
<keyword id="KW-0645">Protease</keyword>
<keyword id="KW-0915">Sodium</keyword>
<keyword id="KW-0888">Threonine protease</keyword>
<comment type="function">
    <text evidence="1">Protease subunit of a proteasome-like degradation complex believed to be a general protein degrading machinery.</text>
</comment>
<comment type="catalytic activity">
    <reaction evidence="1">
        <text>ATP-dependent cleavage of peptide bonds with broad specificity.</text>
        <dbReference type="EC" id="3.4.25.2"/>
    </reaction>
</comment>
<comment type="activity regulation">
    <text evidence="1">Allosterically activated by HslU binding.</text>
</comment>
<comment type="subunit">
    <text evidence="1">A double ring-shaped homohexamer of HslV is capped on each side by a ring-shaped HslU homohexamer. The assembly of the HslU/HslV complex is dependent on binding of ATP.</text>
</comment>
<comment type="subcellular location">
    <subcellularLocation>
        <location evidence="1">Cytoplasm</location>
    </subcellularLocation>
</comment>
<comment type="similarity">
    <text evidence="1">Belongs to the peptidase T1B family. HslV subfamily.</text>
</comment>
<protein>
    <recommendedName>
        <fullName evidence="1">ATP-dependent protease subunit HslV</fullName>
        <ecNumber evidence="1">3.4.25.2</ecNumber>
    </recommendedName>
</protein>
<gene>
    <name evidence="1" type="primary">hslV</name>
    <name type="ordered locus">BCAH820_3842</name>
</gene>
<proteinExistence type="inferred from homology"/>
<accession>B7JJA8</accession>
<reference key="1">
    <citation type="submission" date="2008-10" db="EMBL/GenBank/DDBJ databases">
        <title>Genome sequence of Bacillus cereus AH820.</title>
        <authorList>
            <person name="Dodson R.J."/>
            <person name="Durkin A.S."/>
            <person name="Rosovitz M.J."/>
            <person name="Rasko D.A."/>
            <person name="Hoffmaster A."/>
            <person name="Ravel J."/>
            <person name="Sutton G."/>
        </authorList>
    </citation>
    <scope>NUCLEOTIDE SEQUENCE [LARGE SCALE GENOMIC DNA]</scope>
    <source>
        <strain>AH820</strain>
    </source>
</reference>
<name>HSLV_BACC0</name>
<sequence length="180" mass="19449">MGNFHATTIFAVHHNGECAMAGDGQVTMGNAVVMKHTARKVRKLFQGKVLAGFAGSVADAFTLFEMFEGKLEEYNGNLQRAAVEMAKQWRGDKMLRQLEAMLIVMDKTTMLLVSGTGEVIEPDDGILAIGSGGNYALSAGRALKQYASEHLTAKQIAKASLEIAGDICVYTNHNIIVEEL</sequence>
<organism>
    <name type="scientific">Bacillus cereus (strain AH820)</name>
    <dbReference type="NCBI Taxonomy" id="405535"/>
    <lineage>
        <taxon>Bacteria</taxon>
        <taxon>Bacillati</taxon>
        <taxon>Bacillota</taxon>
        <taxon>Bacilli</taxon>
        <taxon>Bacillales</taxon>
        <taxon>Bacillaceae</taxon>
        <taxon>Bacillus</taxon>
        <taxon>Bacillus cereus group</taxon>
    </lineage>
</organism>
<dbReference type="EC" id="3.4.25.2" evidence="1"/>
<dbReference type="EMBL" id="CP001283">
    <property type="protein sequence ID" value="ACK92508.1"/>
    <property type="molecule type" value="Genomic_DNA"/>
</dbReference>
<dbReference type="RefSeq" id="WP_000526272.1">
    <property type="nucleotide sequence ID" value="NC_011773.1"/>
</dbReference>
<dbReference type="SMR" id="B7JJA8"/>
<dbReference type="MEROPS" id="T01.007"/>
<dbReference type="GeneID" id="45023658"/>
<dbReference type="KEGG" id="bcu:BCAH820_3842"/>
<dbReference type="HOGENOM" id="CLU_093872_1_0_9"/>
<dbReference type="Proteomes" id="UP000001363">
    <property type="component" value="Chromosome"/>
</dbReference>
<dbReference type="GO" id="GO:0009376">
    <property type="term" value="C:HslUV protease complex"/>
    <property type="evidence" value="ECO:0007669"/>
    <property type="project" value="UniProtKB-UniRule"/>
</dbReference>
<dbReference type="GO" id="GO:0005839">
    <property type="term" value="C:proteasome core complex"/>
    <property type="evidence" value="ECO:0007669"/>
    <property type="project" value="InterPro"/>
</dbReference>
<dbReference type="GO" id="GO:0046872">
    <property type="term" value="F:metal ion binding"/>
    <property type="evidence" value="ECO:0007669"/>
    <property type="project" value="UniProtKB-KW"/>
</dbReference>
<dbReference type="GO" id="GO:0004298">
    <property type="term" value="F:threonine-type endopeptidase activity"/>
    <property type="evidence" value="ECO:0007669"/>
    <property type="project" value="UniProtKB-KW"/>
</dbReference>
<dbReference type="GO" id="GO:0051603">
    <property type="term" value="P:proteolysis involved in protein catabolic process"/>
    <property type="evidence" value="ECO:0007669"/>
    <property type="project" value="InterPro"/>
</dbReference>
<dbReference type="CDD" id="cd01913">
    <property type="entry name" value="protease_HslV"/>
    <property type="match status" value="1"/>
</dbReference>
<dbReference type="Gene3D" id="3.60.20.10">
    <property type="entry name" value="Glutamine Phosphoribosylpyrophosphate, subunit 1, domain 1"/>
    <property type="match status" value="1"/>
</dbReference>
<dbReference type="HAMAP" id="MF_00248">
    <property type="entry name" value="HslV"/>
    <property type="match status" value="1"/>
</dbReference>
<dbReference type="InterPro" id="IPR022281">
    <property type="entry name" value="ATP-dep_Prtase_HsIV_su"/>
</dbReference>
<dbReference type="InterPro" id="IPR029055">
    <property type="entry name" value="Ntn_hydrolases_N"/>
</dbReference>
<dbReference type="InterPro" id="IPR001353">
    <property type="entry name" value="Proteasome_sua/b"/>
</dbReference>
<dbReference type="InterPro" id="IPR023333">
    <property type="entry name" value="Proteasome_suB-type"/>
</dbReference>
<dbReference type="NCBIfam" id="TIGR03692">
    <property type="entry name" value="ATP_dep_HslV"/>
    <property type="match status" value="1"/>
</dbReference>
<dbReference type="NCBIfam" id="NF003964">
    <property type="entry name" value="PRK05456.1"/>
    <property type="match status" value="1"/>
</dbReference>
<dbReference type="PANTHER" id="PTHR32194:SF0">
    <property type="entry name" value="ATP-DEPENDENT PROTEASE SUBUNIT HSLV"/>
    <property type="match status" value="1"/>
</dbReference>
<dbReference type="PANTHER" id="PTHR32194">
    <property type="entry name" value="METALLOPROTEASE TLDD"/>
    <property type="match status" value="1"/>
</dbReference>
<dbReference type="Pfam" id="PF00227">
    <property type="entry name" value="Proteasome"/>
    <property type="match status" value="1"/>
</dbReference>
<dbReference type="PIRSF" id="PIRSF039093">
    <property type="entry name" value="HslV"/>
    <property type="match status" value="1"/>
</dbReference>
<dbReference type="SUPFAM" id="SSF56235">
    <property type="entry name" value="N-terminal nucleophile aminohydrolases (Ntn hydrolases)"/>
    <property type="match status" value="1"/>
</dbReference>
<dbReference type="PROSITE" id="PS51476">
    <property type="entry name" value="PROTEASOME_BETA_2"/>
    <property type="match status" value="1"/>
</dbReference>